<proteinExistence type="inferred from homology"/>
<evidence type="ECO:0000255" key="1">
    <source>
        <dbReference type="HAMAP-Rule" id="MF_00454"/>
    </source>
</evidence>
<keyword id="KW-0997">Cell inner membrane</keyword>
<keyword id="KW-1003">Cell membrane</keyword>
<keyword id="KW-0407">Ion channel</keyword>
<keyword id="KW-0406">Ion transport</keyword>
<keyword id="KW-0472">Membrane</keyword>
<keyword id="KW-0479">Metal-binding</keyword>
<keyword id="KW-1185">Reference proteome</keyword>
<keyword id="KW-0915">Sodium</keyword>
<keyword id="KW-0812">Transmembrane</keyword>
<keyword id="KW-1133">Transmembrane helix</keyword>
<keyword id="KW-0813">Transport</keyword>
<reference key="1">
    <citation type="submission" date="2005-10" db="EMBL/GenBank/DDBJ databases">
        <title>Complete sequence of Pelobacter carbinolicus DSM 2380.</title>
        <authorList>
            <person name="Copeland A."/>
            <person name="Lucas S."/>
            <person name="Lapidus A."/>
            <person name="Barry K."/>
            <person name="Detter J.C."/>
            <person name="Glavina T."/>
            <person name="Hammon N."/>
            <person name="Israni S."/>
            <person name="Pitluck S."/>
            <person name="Chertkov O."/>
            <person name="Schmutz J."/>
            <person name="Larimer F."/>
            <person name="Land M."/>
            <person name="Kyrpides N."/>
            <person name="Ivanova N."/>
            <person name="Richardson P."/>
        </authorList>
    </citation>
    <scope>NUCLEOTIDE SEQUENCE [LARGE SCALE GENOMIC DNA]</scope>
    <source>
        <strain>DSM 2380 / NBRC 103641 / GraBd1</strain>
    </source>
</reference>
<feature type="chain" id="PRO_0000252907" description="Fluoride-specific ion channel FluC">
    <location>
        <begin position="1"/>
        <end position="123"/>
    </location>
</feature>
<feature type="transmembrane region" description="Helical" evidence="1">
    <location>
        <begin position="4"/>
        <end position="24"/>
    </location>
</feature>
<feature type="transmembrane region" description="Helical" evidence="1">
    <location>
        <begin position="31"/>
        <end position="51"/>
    </location>
</feature>
<feature type="transmembrane region" description="Helical" evidence="1">
    <location>
        <begin position="64"/>
        <end position="83"/>
    </location>
</feature>
<feature type="transmembrane region" description="Helical" evidence="1">
    <location>
        <begin position="100"/>
        <end position="120"/>
    </location>
</feature>
<feature type="binding site" evidence="1">
    <location>
        <position position="74"/>
    </location>
    <ligand>
        <name>Na(+)</name>
        <dbReference type="ChEBI" id="CHEBI:29101"/>
        <note>structural</note>
    </ligand>
</feature>
<feature type="binding site" evidence="1">
    <location>
        <position position="77"/>
    </location>
    <ligand>
        <name>Na(+)</name>
        <dbReference type="ChEBI" id="CHEBI:29101"/>
        <note>structural</note>
    </ligand>
</feature>
<protein>
    <recommendedName>
        <fullName evidence="1">Fluoride-specific ion channel FluC</fullName>
    </recommendedName>
</protein>
<accession>Q3A5X3</accession>
<dbReference type="EMBL" id="CP000142">
    <property type="protein sequence ID" value="ABA88234.1"/>
    <property type="molecule type" value="Genomic_DNA"/>
</dbReference>
<dbReference type="RefSeq" id="WP_011340701.1">
    <property type="nucleotide sequence ID" value="NC_007498.2"/>
</dbReference>
<dbReference type="SMR" id="Q3A5X3"/>
<dbReference type="STRING" id="338963.Pcar_0981"/>
<dbReference type="KEGG" id="pca:Pcar_0981"/>
<dbReference type="eggNOG" id="COG0239">
    <property type="taxonomic scope" value="Bacteria"/>
</dbReference>
<dbReference type="HOGENOM" id="CLU_114342_3_0_7"/>
<dbReference type="OrthoDB" id="9806299at2"/>
<dbReference type="Proteomes" id="UP000002534">
    <property type="component" value="Chromosome"/>
</dbReference>
<dbReference type="GO" id="GO:0005886">
    <property type="term" value="C:plasma membrane"/>
    <property type="evidence" value="ECO:0007669"/>
    <property type="project" value="UniProtKB-SubCell"/>
</dbReference>
<dbReference type="GO" id="GO:0062054">
    <property type="term" value="F:fluoride channel activity"/>
    <property type="evidence" value="ECO:0007669"/>
    <property type="project" value="UniProtKB-UniRule"/>
</dbReference>
<dbReference type="GO" id="GO:0046872">
    <property type="term" value="F:metal ion binding"/>
    <property type="evidence" value="ECO:0007669"/>
    <property type="project" value="UniProtKB-KW"/>
</dbReference>
<dbReference type="GO" id="GO:0140114">
    <property type="term" value="P:cellular detoxification of fluoride"/>
    <property type="evidence" value="ECO:0007669"/>
    <property type="project" value="UniProtKB-UniRule"/>
</dbReference>
<dbReference type="HAMAP" id="MF_00454">
    <property type="entry name" value="FluC"/>
    <property type="match status" value="1"/>
</dbReference>
<dbReference type="InterPro" id="IPR003691">
    <property type="entry name" value="FluC"/>
</dbReference>
<dbReference type="NCBIfam" id="TIGR00494">
    <property type="entry name" value="crcB"/>
    <property type="match status" value="1"/>
</dbReference>
<dbReference type="PANTHER" id="PTHR28259">
    <property type="entry name" value="FLUORIDE EXPORT PROTEIN 1-RELATED"/>
    <property type="match status" value="1"/>
</dbReference>
<dbReference type="PANTHER" id="PTHR28259:SF1">
    <property type="entry name" value="FLUORIDE EXPORT PROTEIN 1-RELATED"/>
    <property type="match status" value="1"/>
</dbReference>
<dbReference type="Pfam" id="PF02537">
    <property type="entry name" value="CRCB"/>
    <property type="match status" value="1"/>
</dbReference>
<comment type="function">
    <text evidence="1">Fluoride-specific ion channel. Important for reducing fluoride concentration in the cell, thus reducing its toxicity.</text>
</comment>
<comment type="catalytic activity">
    <reaction evidence="1">
        <text>fluoride(in) = fluoride(out)</text>
        <dbReference type="Rhea" id="RHEA:76159"/>
        <dbReference type="ChEBI" id="CHEBI:17051"/>
    </reaction>
    <physiologicalReaction direction="left-to-right" evidence="1">
        <dbReference type="Rhea" id="RHEA:76160"/>
    </physiologicalReaction>
</comment>
<comment type="activity regulation">
    <text evidence="1">Na(+) is not transported, but it plays an essential structural role and its presence is essential for fluoride channel function.</text>
</comment>
<comment type="subcellular location">
    <subcellularLocation>
        <location evidence="1">Cell inner membrane</location>
        <topology evidence="1">Multi-pass membrane protein</topology>
    </subcellularLocation>
</comment>
<comment type="similarity">
    <text evidence="1">Belongs to the fluoride channel Fluc/FEX (TC 1.A.43) family.</text>
</comment>
<name>FLUC_SYNC1</name>
<sequence length="123" mass="12939">MHLVYIAIFGALGCLSRFMVSGWVYALIGRALPYGTLAVNVIGSLLLGLLMEGGLRSAALPADIRMGITTGFMGGFTTFSTFSYETVRLLEDGSMVAAGANILLNVTVSVVFAGLGIFLARQL</sequence>
<organism>
    <name type="scientific">Syntrophotalea carbinolica (strain DSM 2380 / NBRC 103641 / GraBd1)</name>
    <name type="common">Pelobacter carbinolicus</name>
    <dbReference type="NCBI Taxonomy" id="338963"/>
    <lineage>
        <taxon>Bacteria</taxon>
        <taxon>Pseudomonadati</taxon>
        <taxon>Thermodesulfobacteriota</taxon>
        <taxon>Desulfuromonadia</taxon>
        <taxon>Desulfuromonadales</taxon>
        <taxon>Syntrophotaleaceae</taxon>
        <taxon>Syntrophotalea</taxon>
    </lineage>
</organism>
<gene>
    <name evidence="1" type="primary">fluC</name>
    <name evidence="1" type="synonym">crcB</name>
    <name type="ordered locus">Pcar_0981</name>
</gene>